<gene>
    <name evidence="1" type="primary">COQ3</name>
    <name type="ORF">Ca20C1.07</name>
</gene>
<reference key="1">
    <citation type="submission" date="1998-11" db="EMBL/GenBank/DDBJ databases">
        <title>Candida albicans strain 1161 genome pilot sequencing project.</title>
        <authorList>
            <person name="Oliver K."/>
            <person name="Harris D."/>
            <person name="Barrell B.G."/>
            <person name="Rajandream M.A."/>
        </authorList>
    </citation>
    <scope>NUCLEOTIDE SEQUENCE [LARGE SCALE GENOMIC DNA]</scope>
    <source>
        <strain>1161</strain>
    </source>
</reference>
<keyword id="KW-0460">Magnesium</keyword>
<keyword id="KW-0472">Membrane</keyword>
<keyword id="KW-0479">Metal-binding</keyword>
<keyword id="KW-0489">Methyltransferase</keyword>
<keyword id="KW-0496">Mitochondrion</keyword>
<keyword id="KW-0999">Mitochondrion inner membrane</keyword>
<keyword id="KW-0949">S-adenosyl-L-methionine</keyword>
<keyword id="KW-0808">Transferase</keyword>
<keyword id="KW-0831">Ubiquinone biosynthesis</keyword>
<proteinExistence type="inferred from homology"/>
<comment type="function">
    <text evidence="1">O-methyltransferase required for two non-consecutive steps during ubiquinone biosynthesis. Catalyzes the 2 O-methylation of 3,4-dihydroxy-5-(all-trans-polyprenyl)benzoic acid into 4-hydroxy-3-methoxy-5-(all-trans-polyprenyl)benzoic acid. Also catalyzes the last step of ubiquinone biosynthesis by mediating methylation of 3-demethylubiquinone into ubiquinone. Also able to mediate the methylation of 3-demethylubiquinol into ubiquinol.</text>
</comment>
<comment type="catalytic activity">
    <reaction evidence="1">
        <text>a 3,4-dihydroxy-5-(all-trans-polyprenyl)benzoate + S-adenosyl-L-methionine = a 4-hydroxy-3-methoxy-5-(all-trans-polyprenyl)benzoate + S-adenosyl-L-homocysteine + H(+)</text>
        <dbReference type="Rhea" id="RHEA:44452"/>
        <dbReference type="Rhea" id="RHEA-COMP:10930"/>
        <dbReference type="Rhea" id="RHEA-COMP:10931"/>
        <dbReference type="ChEBI" id="CHEBI:15378"/>
        <dbReference type="ChEBI" id="CHEBI:57856"/>
        <dbReference type="ChEBI" id="CHEBI:59789"/>
        <dbReference type="ChEBI" id="CHEBI:64694"/>
        <dbReference type="ChEBI" id="CHEBI:84443"/>
        <dbReference type="EC" id="2.1.1.114"/>
    </reaction>
</comment>
<comment type="catalytic activity">
    <reaction evidence="1">
        <text>a 3-demethylubiquinone + S-adenosyl-L-methionine = a ubiquinone + S-adenosyl-L-homocysteine</text>
        <dbReference type="Rhea" id="RHEA:81215"/>
        <dbReference type="Rhea" id="RHEA-COMP:9565"/>
        <dbReference type="Rhea" id="RHEA-COMP:19654"/>
        <dbReference type="ChEBI" id="CHEBI:16389"/>
        <dbReference type="ChEBI" id="CHEBI:57856"/>
        <dbReference type="ChEBI" id="CHEBI:59789"/>
        <dbReference type="ChEBI" id="CHEBI:231825"/>
    </reaction>
</comment>
<comment type="catalytic activity">
    <reaction evidence="1">
        <text>a 3-demethylubiquinol + S-adenosyl-L-methionine = a ubiquinol + S-adenosyl-L-homocysteine + H(+)</text>
        <dbReference type="Rhea" id="RHEA:44380"/>
        <dbReference type="Rhea" id="RHEA-COMP:9566"/>
        <dbReference type="Rhea" id="RHEA-COMP:10914"/>
        <dbReference type="ChEBI" id="CHEBI:15378"/>
        <dbReference type="ChEBI" id="CHEBI:17976"/>
        <dbReference type="ChEBI" id="CHEBI:57856"/>
        <dbReference type="ChEBI" id="CHEBI:59789"/>
        <dbReference type="ChEBI" id="CHEBI:84422"/>
        <dbReference type="EC" id="2.1.1.64"/>
    </reaction>
</comment>
<comment type="cofactor">
    <cofactor evidence="1">
        <name>Mg(2+)</name>
        <dbReference type="ChEBI" id="CHEBI:18420"/>
    </cofactor>
</comment>
<comment type="pathway">
    <text evidence="1">Cofactor biosynthesis; ubiquinone biosynthesis.</text>
</comment>
<comment type="subunit">
    <text evidence="1">Component of a multi-subunit COQ enzyme complex, composed of at least COQ3, COQ4, COQ5, COQ6, COQ7 and COQ9.</text>
</comment>
<comment type="subcellular location">
    <subcellularLocation>
        <location evidence="1">Mitochondrion inner membrane</location>
        <topology evidence="1">Peripheral membrane protein</topology>
        <orientation evidence="1">Matrix side</orientation>
    </subcellularLocation>
</comment>
<comment type="miscellaneous">
    <text evidence="1">This protein may be expected to contain an N-terminal transit peptide but none has been predicted.</text>
</comment>
<comment type="similarity">
    <text evidence="1">Belongs to the class I-like SAM-binding methyltransferase superfamily. UbiG/COQ3 family.</text>
</comment>
<protein>
    <recommendedName>
        <fullName evidence="1">Ubiquinone biosynthesis O-methyltransferase, mitochondrial</fullName>
    </recommendedName>
    <alternativeName>
        <fullName evidence="1">3,4-dihydroxy-5-hexaprenylbenzoate methyltransferase</fullName>
        <shortName evidence="1">DHHB methyltransferase</shortName>
        <shortName evidence="1">DHHB-MT</shortName>
        <shortName evidence="1">DHHB-MTase</shortName>
    </alternativeName>
    <alternativeName>
        <fullName evidence="1">3-demethylubiquinol 3-O-methyltransferase</fullName>
        <ecNumber evidence="1">2.1.1.64</ecNumber>
    </alternativeName>
    <alternativeName>
        <fullName evidence="1">3-demethylubiquinone 3-O-methyltransferase</fullName>
        <ecNumber evidence="1">2.1.1.-</ecNumber>
    </alternativeName>
    <alternativeName>
        <fullName evidence="1">3-demethylubiquinone-6 3-O-methyltransferase</fullName>
    </alternativeName>
    <alternativeName>
        <fullName evidence="1">Hexaprenyldihydroxybenzoate methyltransferase</fullName>
    </alternativeName>
    <alternativeName>
        <fullName evidence="1">Polyprenyldihydroxybenzoate methyltransferase</fullName>
        <ecNumber evidence="1">2.1.1.114</ecNumber>
    </alternativeName>
</protein>
<dbReference type="EC" id="2.1.1.64" evidence="1"/>
<dbReference type="EC" id="2.1.1.-" evidence="1"/>
<dbReference type="EC" id="2.1.1.114" evidence="1"/>
<dbReference type="EMBL" id="AL033391">
    <property type="protein sequence ID" value="CAA21929.1"/>
    <property type="molecule type" value="Genomic_DNA"/>
</dbReference>
<dbReference type="SMR" id="O93995"/>
<dbReference type="VEuPathDB" id="FungiDB:C6_01840C_A"/>
<dbReference type="VEuPathDB" id="FungiDB:CAWG_05184"/>
<dbReference type="UniPathway" id="UPA00232"/>
<dbReference type="GO" id="GO:0031314">
    <property type="term" value="C:extrinsic component of mitochondrial inner membrane"/>
    <property type="evidence" value="ECO:0007669"/>
    <property type="project" value="UniProtKB-UniRule"/>
</dbReference>
<dbReference type="GO" id="GO:0061542">
    <property type="term" value="F:3-demethylubiquinol 3-O-methyltransferase activity"/>
    <property type="evidence" value="ECO:0007669"/>
    <property type="project" value="UniProtKB-UniRule"/>
</dbReference>
<dbReference type="GO" id="GO:0120537">
    <property type="term" value="F:3-demethylubiquinone 3-O-methyltransferase activity"/>
    <property type="evidence" value="ECO:0007669"/>
    <property type="project" value="RHEA"/>
</dbReference>
<dbReference type="GO" id="GO:0010420">
    <property type="term" value="F:polyprenyldihydroxybenzoate methyltransferase activity"/>
    <property type="evidence" value="ECO:0007669"/>
    <property type="project" value="UniProtKB-UniRule"/>
</dbReference>
<dbReference type="GO" id="GO:0032259">
    <property type="term" value="P:methylation"/>
    <property type="evidence" value="ECO:0007669"/>
    <property type="project" value="UniProtKB-KW"/>
</dbReference>
<dbReference type="CDD" id="cd02440">
    <property type="entry name" value="AdoMet_MTases"/>
    <property type="match status" value="1"/>
</dbReference>
<dbReference type="Gene3D" id="3.40.50.150">
    <property type="entry name" value="Vaccinia Virus protein VP39"/>
    <property type="match status" value="1"/>
</dbReference>
<dbReference type="HAMAP" id="MF_00472">
    <property type="entry name" value="UbiG"/>
    <property type="match status" value="1"/>
</dbReference>
<dbReference type="InterPro" id="IPR029063">
    <property type="entry name" value="SAM-dependent_MTases_sf"/>
</dbReference>
<dbReference type="InterPro" id="IPR010233">
    <property type="entry name" value="UbiG_MeTrfase"/>
</dbReference>
<dbReference type="NCBIfam" id="TIGR01983">
    <property type="entry name" value="UbiG"/>
    <property type="match status" value="1"/>
</dbReference>
<dbReference type="PANTHER" id="PTHR43464">
    <property type="entry name" value="METHYLTRANSFERASE"/>
    <property type="match status" value="1"/>
</dbReference>
<dbReference type="PANTHER" id="PTHR43464:SF19">
    <property type="entry name" value="UBIQUINONE BIOSYNTHESIS O-METHYLTRANSFERASE, MITOCHONDRIAL"/>
    <property type="match status" value="1"/>
</dbReference>
<dbReference type="Pfam" id="PF13489">
    <property type="entry name" value="Methyltransf_23"/>
    <property type="match status" value="1"/>
</dbReference>
<dbReference type="SUPFAM" id="SSF53335">
    <property type="entry name" value="S-adenosyl-L-methionine-dependent methyltransferases"/>
    <property type="match status" value="1"/>
</dbReference>
<accession>O93995</accession>
<organism>
    <name type="scientific">Candida albicans</name>
    <name type="common">Yeast</name>
    <dbReference type="NCBI Taxonomy" id="5476"/>
    <lineage>
        <taxon>Eukaryota</taxon>
        <taxon>Fungi</taxon>
        <taxon>Dikarya</taxon>
        <taxon>Ascomycota</taxon>
        <taxon>Saccharomycotina</taxon>
        <taxon>Pichiomycetes</taxon>
        <taxon>Debaryomycetaceae</taxon>
        <taxon>Candida/Lodderomyces clade</taxon>
        <taxon>Candida</taxon>
    </lineage>
</organism>
<feature type="chain" id="PRO_0000035930" description="Ubiquinone biosynthesis O-methyltransferase, mitochondrial">
    <location>
        <begin position="1"/>
        <end position="327"/>
    </location>
</feature>
<feature type="binding site" evidence="1">
    <location>
        <position position="79"/>
    </location>
    <ligand>
        <name>S-adenosyl-L-methionine</name>
        <dbReference type="ChEBI" id="CHEBI:59789"/>
    </ligand>
</feature>
<feature type="binding site" evidence="1">
    <location>
        <position position="142"/>
    </location>
    <ligand>
        <name>S-adenosyl-L-methionine</name>
        <dbReference type="ChEBI" id="CHEBI:59789"/>
    </ligand>
</feature>
<feature type="binding site" evidence="1">
    <location>
        <position position="165"/>
    </location>
    <ligand>
        <name>S-adenosyl-L-methionine</name>
        <dbReference type="ChEBI" id="CHEBI:59789"/>
    </ligand>
</feature>
<feature type="binding site" evidence="1">
    <location>
        <position position="210"/>
    </location>
    <ligand>
        <name>S-adenosyl-L-methionine</name>
        <dbReference type="ChEBI" id="CHEBI:59789"/>
    </ligand>
</feature>
<feature type="binding site" evidence="1">
    <location>
        <position position="211"/>
    </location>
    <ligand>
        <name>Mg(2+)</name>
        <dbReference type="ChEBI" id="CHEBI:18420"/>
    </ligand>
</feature>
<feature type="binding site" evidence="1">
    <location>
        <position position="214"/>
    </location>
    <ligand>
        <name>Mg(2+)</name>
        <dbReference type="ChEBI" id="CHEBI:18420"/>
    </ligand>
</feature>
<feature type="binding site" evidence="1">
    <location>
        <position position="215"/>
    </location>
    <ligand>
        <name>Mg(2+)</name>
        <dbReference type="ChEBI" id="CHEBI:18420"/>
    </ligand>
</feature>
<evidence type="ECO:0000255" key="1">
    <source>
        <dbReference type="HAMAP-Rule" id="MF_03190"/>
    </source>
</evidence>
<sequence length="327" mass="37561">MMVFLVSFISVEMKSMHCAPLFRQLVFSRSLHYSKTIFHNGRGLTSTSESEMSHFNALASSWWDVNGPQRILHKMNLLRMDFIHDTIRKNLKLNENTDDEVYIPPFSVDLLPQGIKNKIDEDQEMRRDEILNDSSLTVLDVGCGGGILSESMARLSFVSSVKGIDLSADVLEAAKLHKQKDPMLKDKLSYTLNAIEDIPETERFDIVTMFEVLEHVDYPSRVLLEGLKRLESGGWLFLSTINRDFVSWFTTIFMGEHVLRIVPVGTHTLEKYINQSEIKDWLQEDSNRKSEFRVADTKGCVYLPAYGWKFTSCPDVGNYFMAIQRVK</sequence>
<name>COQ3_CANAX</name>